<protein>
    <recommendedName>
        <fullName evidence="5">Dehydratase asqC</fullName>
        <ecNumber evidence="4">4.2.1.-</ecNumber>
    </recommendedName>
    <alternativeName>
        <fullName evidence="6">4'-methoxyviridicatin/aspoquinolone biosynthesis cluster protein asqC</fullName>
    </alternativeName>
    <alternativeName>
        <fullName evidence="5">Aspoquinolone biosynthesis protein C</fullName>
    </alternativeName>
</protein>
<gene>
    <name evidence="5" type="primary">asqC</name>
    <name type="ORF">AN9234</name>
</gene>
<feature type="signal peptide" evidence="1">
    <location>
        <begin position="1"/>
        <end position="18"/>
    </location>
</feature>
<feature type="chain" id="PRO_5007924299" description="Dehydratase asqC">
    <location>
        <begin position="19"/>
        <end position="347"/>
    </location>
</feature>
<feature type="glycosylation site" description="N-linked (GlcNAc...) asparagine" evidence="2">
    <location>
        <position position="51"/>
    </location>
</feature>
<feature type="glycosylation site" description="N-linked (GlcNAc...) asparagine" evidence="2">
    <location>
        <position position="103"/>
    </location>
</feature>
<feature type="glycosylation site" description="N-linked (GlcNAc...) asparagine" evidence="2">
    <location>
        <position position="131"/>
    </location>
</feature>
<feature type="glycosylation site" description="N-linked (GlcNAc...) asparagine" evidence="2">
    <location>
        <position position="143"/>
    </location>
</feature>
<feature type="glycosylation site" description="N-linked (GlcNAc...) asparagine" evidence="2">
    <location>
        <position position="215"/>
    </location>
</feature>
<feature type="glycosylation site" description="N-linked (GlcNAc...) asparagine" evidence="2">
    <location>
        <position position="264"/>
    </location>
</feature>
<feature type="glycosylation site" description="N-linked (GlcNAc...) asparagine" evidence="2">
    <location>
        <position position="281"/>
    </location>
</feature>
<accession>Q5AR46</accession>
<accession>C8VJP5</accession>
<dbReference type="EC" id="4.2.1.-" evidence="4"/>
<dbReference type="EMBL" id="BN001306">
    <property type="protein sequence ID" value="CBF82265.1"/>
    <property type="molecule type" value="Genomic_DNA"/>
</dbReference>
<dbReference type="EMBL" id="AACD01000170">
    <property type="protein sequence ID" value="EAA61525.1"/>
    <property type="molecule type" value="Genomic_DNA"/>
</dbReference>
<dbReference type="RefSeq" id="XP_682503.1">
    <property type="nucleotide sequence ID" value="XM_677411.1"/>
</dbReference>
<dbReference type="SMR" id="Q5AR46"/>
<dbReference type="STRING" id="227321.Q5AR46"/>
<dbReference type="GlyCosmos" id="Q5AR46">
    <property type="glycosylation" value="7 sites, No reported glycans"/>
</dbReference>
<dbReference type="EnsemblFungi" id="CBF82265">
    <property type="protein sequence ID" value="CBF82265"/>
    <property type="gene ID" value="ANIA_09234"/>
</dbReference>
<dbReference type="KEGG" id="ani:ANIA_09234"/>
<dbReference type="eggNOG" id="ENOG502SPEU">
    <property type="taxonomic scope" value="Eukaryota"/>
</dbReference>
<dbReference type="HOGENOM" id="CLU_046730_0_0_1"/>
<dbReference type="InParanoid" id="Q5AR46"/>
<dbReference type="OMA" id="PGYSWYW"/>
<dbReference type="OrthoDB" id="5295747at2759"/>
<dbReference type="BioCyc" id="MetaCyc:MONOMER-124181"/>
<dbReference type="Proteomes" id="UP000000560">
    <property type="component" value="Chromosome VI"/>
</dbReference>
<dbReference type="GO" id="GO:0016829">
    <property type="term" value="F:lyase activity"/>
    <property type="evidence" value="ECO:0007669"/>
    <property type="project" value="UniProtKB-KW"/>
</dbReference>
<dbReference type="Gene3D" id="2.40.370.10">
    <property type="entry name" value="AttH-like domain"/>
    <property type="match status" value="2"/>
</dbReference>
<dbReference type="InterPro" id="IPR023374">
    <property type="entry name" value="AttH-like_dom_sf"/>
</dbReference>
<dbReference type="InterPro" id="IPR010791">
    <property type="entry name" value="AttH_dom"/>
</dbReference>
<dbReference type="InterPro" id="IPR053112">
    <property type="entry name" value="Fungal_Dehydratase/Hydratase"/>
</dbReference>
<dbReference type="PANTHER" id="PTHR40617:SF1">
    <property type="entry name" value="ATTH DOMAIN-CONTAINING PROTEIN-RELATED"/>
    <property type="match status" value="1"/>
</dbReference>
<dbReference type="PANTHER" id="PTHR40617">
    <property type="entry name" value="TERPENE CYCLASE ASQC"/>
    <property type="match status" value="1"/>
</dbReference>
<dbReference type="Pfam" id="PF07143">
    <property type="entry name" value="CrtC"/>
    <property type="match status" value="1"/>
</dbReference>
<dbReference type="SUPFAM" id="SSF159245">
    <property type="entry name" value="AttH-like"/>
    <property type="match status" value="1"/>
</dbReference>
<reference key="1">
    <citation type="journal article" date="2005" name="Nature">
        <title>Sequencing of Aspergillus nidulans and comparative analysis with A. fumigatus and A. oryzae.</title>
        <authorList>
            <person name="Galagan J.E."/>
            <person name="Calvo S.E."/>
            <person name="Cuomo C."/>
            <person name="Ma L.-J."/>
            <person name="Wortman J.R."/>
            <person name="Batzoglou S."/>
            <person name="Lee S.-I."/>
            <person name="Bastuerkmen M."/>
            <person name="Spevak C.C."/>
            <person name="Clutterbuck J."/>
            <person name="Kapitonov V."/>
            <person name="Jurka J."/>
            <person name="Scazzocchio C."/>
            <person name="Farman M.L."/>
            <person name="Butler J."/>
            <person name="Purcell S."/>
            <person name="Harris S."/>
            <person name="Braus G.H."/>
            <person name="Draht O."/>
            <person name="Busch S."/>
            <person name="D'Enfert C."/>
            <person name="Bouchier C."/>
            <person name="Goldman G.H."/>
            <person name="Bell-Pedersen D."/>
            <person name="Griffiths-Jones S."/>
            <person name="Doonan J.H."/>
            <person name="Yu J."/>
            <person name="Vienken K."/>
            <person name="Pain A."/>
            <person name="Freitag M."/>
            <person name="Selker E.U."/>
            <person name="Archer D.B."/>
            <person name="Penalva M.A."/>
            <person name="Oakley B.R."/>
            <person name="Momany M."/>
            <person name="Tanaka T."/>
            <person name="Kumagai T."/>
            <person name="Asai K."/>
            <person name="Machida M."/>
            <person name="Nierman W.C."/>
            <person name="Denning D.W."/>
            <person name="Caddick M.X."/>
            <person name="Hynes M."/>
            <person name="Paoletti M."/>
            <person name="Fischer R."/>
            <person name="Miller B.L."/>
            <person name="Dyer P.S."/>
            <person name="Sachs M.S."/>
            <person name="Osmani S.A."/>
            <person name="Birren B.W."/>
        </authorList>
    </citation>
    <scope>NUCLEOTIDE SEQUENCE [LARGE SCALE GENOMIC DNA]</scope>
    <source>
        <strain>FGSC A4 / ATCC 38163 / CBS 112.46 / NRRL 194 / M139</strain>
    </source>
</reference>
<reference key="2">
    <citation type="journal article" date="2009" name="Fungal Genet. Biol.">
        <title>The 2008 update of the Aspergillus nidulans genome annotation: a community effort.</title>
        <authorList>
            <person name="Wortman J.R."/>
            <person name="Gilsenan J.M."/>
            <person name="Joardar V."/>
            <person name="Deegan J."/>
            <person name="Clutterbuck J."/>
            <person name="Andersen M.R."/>
            <person name="Archer D."/>
            <person name="Bencina M."/>
            <person name="Braus G."/>
            <person name="Coutinho P."/>
            <person name="von Dohren H."/>
            <person name="Doonan J."/>
            <person name="Driessen A.J."/>
            <person name="Durek P."/>
            <person name="Espeso E."/>
            <person name="Fekete E."/>
            <person name="Flipphi M."/>
            <person name="Estrada C.G."/>
            <person name="Geysens S."/>
            <person name="Goldman G."/>
            <person name="de Groot P.W."/>
            <person name="Hansen K."/>
            <person name="Harris S.D."/>
            <person name="Heinekamp T."/>
            <person name="Helmstaedt K."/>
            <person name="Henrissat B."/>
            <person name="Hofmann G."/>
            <person name="Homan T."/>
            <person name="Horio T."/>
            <person name="Horiuchi H."/>
            <person name="James S."/>
            <person name="Jones M."/>
            <person name="Karaffa L."/>
            <person name="Karanyi Z."/>
            <person name="Kato M."/>
            <person name="Keller N."/>
            <person name="Kelly D.E."/>
            <person name="Kiel J.A."/>
            <person name="Kim J.M."/>
            <person name="van der Klei I.J."/>
            <person name="Klis F.M."/>
            <person name="Kovalchuk A."/>
            <person name="Krasevec N."/>
            <person name="Kubicek C.P."/>
            <person name="Liu B."/>
            <person name="Maccabe A."/>
            <person name="Meyer V."/>
            <person name="Mirabito P."/>
            <person name="Miskei M."/>
            <person name="Mos M."/>
            <person name="Mullins J."/>
            <person name="Nelson D.R."/>
            <person name="Nielsen J."/>
            <person name="Oakley B.R."/>
            <person name="Osmani S.A."/>
            <person name="Pakula T."/>
            <person name="Paszewski A."/>
            <person name="Paulsen I."/>
            <person name="Pilsyk S."/>
            <person name="Pocsi I."/>
            <person name="Punt P.J."/>
            <person name="Ram A.F."/>
            <person name="Ren Q."/>
            <person name="Robellet X."/>
            <person name="Robson G."/>
            <person name="Seiboth B."/>
            <person name="van Solingen P."/>
            <person name="Specht T."/>
            <person name="Sun J."/>
            <person name="Taheri-Talesh N."/>
            <person name="Takeshita N."/>
            <person name="Ussery D."/>
            <person name="vanKuyk P.A."/>
            <person name="Visser H."/>
            <person name="van de Vondervoort P.J."/>
            <person name="de Vries R.P."/>
            <person name="Walton J."/>
            <person name="Xiang X."/>
            <person name="Xiong Y."/>
            <person name="Zeng A.P."/>
            <person name="Brandt B.W."/>
            <person name="Cornell M.J."/>
            <person name="van den Hondel C.A."/>
            <person name="Visser J."/>
            <person name="Oliver S.G."/>
            <person name="Turner G."/>
        </authorList>
    </citation>
    <scope>GENOME REANNOTATION</scope>
    <source>
        <strain>FGSC A4 / ATCC 38163 / CBS 112.46 / NRRL 194 / M139</strain>
    </source>
</reference>
<reference key="3">
    <citation type="journal article" date="2014" name="Angew. Chem. Int. Ed.">
        <title>Non-heme dioxygenase catalyzes atypical oxidations of 6,7-bicyclic systems to form the 6,6-quinolone core of viridicatin-type fungal alkaloids.</title>
        <authorList>
            <person name="Ishikawa N."/>
            <person name="Tanaka H."/>
            <person name="Koyama F."/>
            <person name="Noguchi H."/>
            <person name="Wang C.C."/>
            <person name="Hotta K."/>
            <person name="Watanabe K."/>
        </authorList>
    </citation>
    <scope>FUNCTION</scope>
</reference>
<reference key="4">
    <citation type="journal article" date="2017" name="Nat. Chem. Biol.">
        <title>Enzyme-catalyzed cationic epoxide rearrangements in quinolone alkaloid biosynthesis.</title>
        <authorList>
            <person name="Zou Y."/>
            <person name="Garcia-Borras M."/>
            <person name="Tang M.C."/>
            <person name="Hirayama Y."/>
            <person name="Li D.H."/>
            <person name="Li L."/>
            <person name="Watanabe K."/>
            <person name="Houk K.N."/>
            <person name="Tang Y."/>
        </authorList>
    </citation>
    <scope>FUNCTION</scope>
    <scope>CATALYTIC ACTIVITY</scope>
    <scope>PATHWAY</scope>
</reference>
<keyword id="KW-0325">Glycoprotein</keyword>
<keyword id="KW-0456">Lyase</keyword>
<keyword id="KW-1185">Reference proteome</keyword>
<keyword id="KW-0732">Signal</keyword>
<organism>
    <name type="scientific">Emericella nidulans (strain FGSC A4 / ATCC 38163 / CBS 112.46 / NRRL 194 / M139)</name>
    <name type="common">Aspergillus nidulans</name>
    <dbReference type="NCBI Taxonomy" id="227321"/>
    <lineage>
        <taxon>Eukaryota</taxon>
        <taxon>Fungi</taxon>
        <taxon>Dikarya</taxon>
        <taxon>Ascomycota</taxon>
        <taxon>Pezizomycotina</taxon>
        <taxon>Eurotiomycetes</taxon>
        <taxon>Eurotiomycetidae</taxon>
        <taxon>Eurotiales</taxon>
        <taxon>Aspergillaceae</taxon>
        <taxon>Aspergillus</taxon>
        <taxon>Aspergillus subgen. Nidulantes</taxon>
    </lineage>
</organism>
<sequence>MRPAILAAFSTLPAAAKATYPFAPETFDGSYKDIGLPTIYDLSATQSTNYNGSWATGSWITSVSGGQYFVVSHYVNDGIHDVYRSSILDLSSLKYRYFFQAGNGSYTASPPSHLKAGVGKGNGFEGISNDNYTTMRVQSSHPNVTFDLTYHATTKPLINGGAGVVMLGASESKQWSLPACWTNGFLIVGDEQIPIDPKRSLTWYDRQWGTGGLTNWTWYGLHIPKTGHVLSIWTGDTDADRAAPITPVRFATVRNAYGAQTVCNITWIPDLSHIFHSDSTNKSYPLAWTVEIPSYDAIIKVKSRTENQLNTGSHGSEPEAYNGFVTFAGQFQGTETEGFGIVEIVYL</sequence>
<comment type="function">
    <text evidence="3 4 6">Dehydratase; part of the gene cluster that mediates the biosynthesis of the aspoquinolone mycotoxins (PubMed:25251934, PubMed:28114276). Within the pathway, the dehydratase asqC catalyzes the dehydratation of the epoxide at C-3 to produce (1'E,3'E)-5-(3,3-dimethyloxiran-2-yl)-3-methylhexa-1,3-dienyl-quinolinone B (PubMed:28114276). The first step of the pathway is catalyzed by the nonribosomal peptide synthetase asqK that condenses anthranilic acid and O-methyl-L-tyrosine to produce 4'-methoxycyclopeptin. 4'-methoxycyclopeptin is then converted to 4'-methoxydehydrocyclopeptin by the ketoglutarate-dependent dioxygenase asqJ. AsqJ also converts its first product 4'-methoxydehydrocyclopeptin to 4'-methoxycyclopenin. The following conversion of 4'-methoxycyclopenin into 4'-methoxyviridicatin is catalyzed by the cyclopenase asqI. 4'-methoxyviridicatin is the precursor of quinolone natural products, and is further converted to quinolinone B. The prenyltransferase asqH1 then catalyzes the canonical Friedel-Crafts alkylation of quinolinone B with dimethylallyl cation to yield dimethylallyl quinolone, which is subjected to FAD-dependent dehydrogenation by the FAD-linked oxidoreductase asqF to yield conjugated aryl diene. The delta(3') double bond then serves as the site of the second alkylation with DMAPP catalyzed by the prenyltransferase asqH2 to yield a carbenium ion intermediate, which can be attacked by H(2)O to yield a styrenyl quinolone containing a C3'-hydroxyprenyl chain. The FAD-dependent monooxygenase asqG performs epoxidation of the terminal C7'-C8' olefin. Finally, after dehydratation of the epoxide at C3 by asqC, the quinolone epoxide rearrangement protein asqO catalyzes an enzymatic 3-exo-tet cyclization to yield the cyclopropyl-THF ring system in aspoquinolone (Probable).</text>
</comment>
<comment type="catalytic activity">
    <reaction evidence="4">
        <text>[(1'E)-5'-(3',3'-dimethyloxiran-2'-yl)-3'-hydroxy-3'-methylpent-1'-en-1'-yl]-quinolinone B = (1'E,3'E)-5-(3,3-dimethyloxiran-2-yl)-3-methylhexa-1,3-dienyl-quinolinone B + H2O</text>
        <dbReference type="Rhea" id="RHEA:74507"/>
        <dbReference type="ChEBI" id="CHEBI:15377"/>
        <dbReference type="ChEBI" id="CHEBI:193079"/>
        <dbReference type="ChEBI" id="CHEBI:193561"/>
    </reaction>
    <physiologicalReaction direction="left-to-right" evidence="4">
        <dbReference type="Rhea" id="RHEA:74508"/>
    </physiologicalReaction>
</comment>
<comment type="pathway">
    <text evidence="4">Secondary metabolite biosynthesis.</text>
</comment>
<comment type="pathway">
    <text evidence="4">Alkaloid biosynthesis.</text>
</comment>
<comment type="pathway">
    <text evidence="4">Mycotoxin biosynthesis.</text>
</comment>
<name>ASQC_EMENI</name>
<proteinExistence type="evidence at protein level"/>
<evidence type="ECO:0000255" key="1"/>
<evidence type="ECO:0000255" key="2">
    <source>
        <dbReference type="PROSITE-ProRule" id="PRU00498"/>
    </source>
</evidence>
<evidence type="ECO:0000269" key="3">
    <source>
    </source>
</evidence>
<evidence type="ECO:0000269" key="4">
    <source>
    </source>
</evidence>
<evidence type="ECO:0000303" key="5">
    <source>
    </source>
</evidence>
<evidence type="ECO:0000305" key="6"/>